<comment type="function">
    <text evidence="1">Converts the preformed base xanthine, a product of nucleic acid breakdown, to xanthosine 5'-monophosphate (XMP), so it can be reused for RNA or DNA synthesis.</text>
</comment>
<comment type="catalytic activity">
    <reaction evidence="1">
        <text>XMP + diphosphate = xanthine + 5-phospho-alpha-D-ribose 1-diphosphate</text>
        <dbReference type="Rhea" id="RHEA:10800"/>
        <dbReference type="ChEBI" id="CHEBI:17712"/>
        <dbReference type="ChEBI" id="CHEBI:33019"/>
        <dbReference type="ChEBI" id="CHEBI:57464"/>
        <dbReference type="ChEBI" id="CHEBI:58017"/>
        <dbReference type="EC" id="2.4.2.22"/>
    </reaction>
</comment>
<comment type="pathway">
    <text evidence="1">Purine metabolism; XMP biosynthesis via salvage pathway; XMP from xanthine: step 1/1.</text>
</comment>
<comment type="subunit">
    <text evidence="1">Homodimer.</text>
</comment>
<comment type="subcellular location">
    <subcellularLocation>
        <location evidence="1">Cytoplasm</location>
    </subcellularLocation>
</comment>
<comment type="similarity">
    <text evidence="1">Belongs to the purine/pyrimidine phosphoribosyltransferase family. Xpt subfamily.</text>
</comment>
<feature type="chain" id="PRO_1000213768" description="Xanthine phosphoribosyltransferase">
    <location>
        <begin position="1"/>
        <end position="188"/>
    </location>
</feature>
<feature type="binding site" evidence="1">
    <location>
        <position position="20"/>
    </location>
    <ligand>
        <name>xanthine</name>
        <dbReference type="ChEBI" id="CHEBI:17712"/>
    </ligand>
</feature>
<feature type="binding site" evidence="1">
    <location>
        <position position="27"/>
    </location>
    <ligand>
        <name>xanthine</name>
        <dbReference type="ChEBI" id="CHEBI:17712"/>
    </ligand>
</feature>
<feature type="binding site" evidence="1">
    <location>
        <begin position="127"/>
        <end position="131"/>
    </location>
    <ligand>
        <name>5-phospho-alpha-D-ribose 1-diphosphate</name>
        <dbReference type="ChEBI" id="CHEBI:58017"/>
    </ligand>
</feature>
<feature type="binding site" evidence="1">
    <location>
        <position position="155"/>
    </location>
    <ligand>
        <name>xanthine</name>
        <dbReference type="ChEBI" id="CHEBI:17712"/>
    </ligand>
</feature>
<organism>
    <name type="scientific">Heliobacterium modesticaldum (strain ATCC 51547 / Ice1)</name>
    <dbReference type="NCBI Taxonomy" id="498761"/>
    <lineage>
        <taxon>Bacteria</taxon>
        <taxon>Bacillati</taxon>
        <taxon>Bacillota</taxon>
        <taxon>Clostridia</taxon>
        <taxon>Eubacteriales</taxon>
        <taxon>Heliobacteriaceae</taxon>
        <taxon>Heliomicrobium</taxon>
    </lineage>
</organism>
<proteinExistence type="inferred from homology"/>
<reference key="1">
    <citation type="journal article" date="2008" name="J. Bacteriol.">
        <title>The genome of Heliobacterium modesticaldum, a phototrophic representative of the Firmicutes containing the simplest photosynthetic apparatus.</title>
        <authorList>
            <person name="Sattley W.M."/>
            <person name="Madigan M.T."/>
            <person name="Swingley W.D."/>
            <person name="Cheung P.C."/>
            <person name="Clocksin K.M."/>
            <person name="Conrad A.L."/>
            <person name="Dejesa L.C."/>
            <person name="Honchak B.M."/>
            <person name="Jung D.O."/>
            <person name="Karbach L.E."/>
            <person name="Kurdoglu A."/>
            <person name="Lahiri S."/>
            <person name="Mastrian S.D."/>
            <person name="Page L.E."/>
            <person name="Taylor H.L."/>
            <person name="Wang Z.T."/>
            <person name="Raymond J."/>
            <person name="Chen M."/>
            <person name="Blankenship R.E."/>
            <person name="Touchman J.W."/>
        </authorList>
    </citation>
    <scope>NUCLEOTIDE SEQUENCE [LARGE SCALE GENOMIC DNA]</scope>
    <source>
        <strain>ATCC 51547 / Ice1</strain>
    </source>
</reference>
<keyword id="KW-0963">Cytoplasm</keyword>
<keyword id="KW-0328">Glycosyltransferase</keyword>
<keyword id="KW-0660">Purine salvage</keyword>
<keyword id="KW-1185">Reference proteome</keyword>
<keyword id="KW-0808">Transferase</keyword>
<sequence length="188" mass="20163">MQELKDRILAEGEVIGTHILKVDTFLNHQIDPAFILRMGKELADRFAGAGITRVLTVEASGIAVASAVALSLNVPVVFAKKKQASTQSDVYTSQIYSFTRQESVNITVSKKFLPADDVVLIVDDFLAHGEALKGLVDIVRQSGAGLAGAGIVIEKLFQRGGAALRAEGMRIETLAAIERMEPGKIVFA</sequence>
<accession>B0TCJ8</accession>
<protein>
    <recommendedName>
        <fullName evidence="1">Xanthine phosphoribosyltransferase</fullName>
        <shortName evidence="1">XPRTase</shortName>
        <ecNumber evidence="1">2.4.2.22</ecNumber>
    </recommendedName>
</protein>
<dbReference type="EC" id="2.4.2.22" evidence="1"/>
<dbReference type="EMBL" id="CP000930">
    <property type="protein sequence ID" value="ABZ84024.1"/>
    <property type="molecule type" value="Genomic_DNA"/>
</dbReference>
<dbReference type="RefSeq" id="WP_012282539.1">
    <property type="nucleotide sequence ID" value="NC_010337.2"/>
</dbReference>
<dbReference type="SMR" id="B0TCJ8"/>
<dbReference type="STRING" id="498761.HM1_1451"/>
<dbReference type="KEGG" id="hmo:HM1_1451"/>
<dbReference type="eggNOG" id="COG0503">
    <property type="taxonomic scope" value="Bacteria"/>
</dbReference>
<dbReference type="HOGENOM" id="CLU_099015_0_0_9"/>
<dbReference type="OrthoDB" id="9790678at2"/>
<dbReference type="UniPathway" id="UPA00602">
    <property type="reaction ID" value="UER00658"/>
</dbReference>
<dbReference type="Proteomes" id="UP000008550">
    <property type="component" value="Chromosome"/>
</dbReference>
<dbReference type="GO" id="GO:0005737">
    <property type="term" value="C:cytoplasm"/>
    <property type="evidence" value="ECO:0007669"/>
    <property type="project" value="UniProtKB-SubCell"/>
</dbReference>
<dbReference type="GO" id="GO:0000310">
    <property type="term" value="F:xanthine phosphoribosyltransferase activity"/>
    <property type="evidence" value="ECO:0007669"/>
    <property type="project" value="UniProtKB-UniRule"/>
</dbReference>
<dbReference type="GO" id="GO:0006166">
    <property type="term" value="P:purine ribonucleoside salvage"/>
    <property type="evidence" value="ECO:0007669"/>
    <property type="project" value="UniProtKB-KW"/>
</dbReference>
<dbReference type="GO" id="GO:0046110">
    <property type="term" value="P:xanthine metabolic process"/>
    <property type="evidence" value="ECO:0007669"/>
    <property type="project" value="InterPro"/>
</dbReference>
<dbReference type="GO" id="GO:0032265">
    <property type="term" value="P:XMP salvage"/>
    <property type="evidence" value="ECO:0007669"/>
    <property type="project" value="UniProtKB-UniRule"/>
</dbReference>
<dbReference type="CDD" id="cd06223">
    <property type="entry name" value="PRTases_typeI"/>
    <property type="match status" value="1"/>
</dbReference>
<dbReference type="Gene3D" id="3.40.50.2020">
    <property type="match status" value="1"/>
</dbReference>
<dbReference type="HAMAP" id="MF_01184">
    <property type="entry name" value="XPRTase"/>
    <property type="match status" value="1"/>
</dbReference>
<dbReference type="InterPro" id="IPR000836">
    <property type="entry name" value="PRibTrfase_dom"/>
</dbReference>
<dbReference type="InterPro" id="IPR029057">
    <property type="entry name" value="PRTase-like"/>
</dbReference>
<dbReference type="InterPro" id="IPR050118">
    <property type="entry name" value="Pur/Pyrimidine_PRTase"/>
</dbReference>
<dbReference type="InterPro" id="IPR010079">
    <property type="entry name" value="Xanthine_PRibTrfase"/>
</dbReference>
<dbReference type="NCBIfam" id="NF006671">
    <property type="entry name" value="PRK09219.1"/>
    <property type="match status" value="1"/>
</dbReference>
<dbReference type="NCBIfam" id="TIGR01744">
    <property type="entry name" value="XPRTase"/>
    <property type="match status" value="1"/>
</dbReference>
<dbReference type="PANTHER" id="PTHR43864">
    <property type="entry name" value="HYPOXANTHINE/GUANINE PHOSPHORIBOSYLTRANSFERASE"/>
    <property type="match status" value="1"/>
</dbReference>
<dbReference type="PANTHER" id="PTHR43864:SF1">
    <property type="entry name" value="XANTHINE PHOSPHORIBOSYLTRANSFERASE"/>
    <property type="match status" value="1"/>
</dbReference>
<dbReference type="Pfam" id="PF00156">
    <property type="entry name" value="Pribosyltran"/>
    <property type="match status" value="1"/>
</dbReference>
<dbReference type="SUPFAM" id="SSF53271">
    <property type="entry name" value="PRTase-like"/>
    <property type="match status" value="1"/>
</dbReference>
<evidence type="ECO:0000255" key="1">
    <source>
        <dbReference type="HAMAP-Rule" id="MF_01184"/>
    </source>
</evidence>
<gene>
    <name evidence="1" type="primary">xpt</name>
    <name type="ordered locus">Helmi_13990</name>
    <name type="ORF">HM1_1451</name>
</gene>
<name>XPT_HELMI</name>